<feature type="chain" id="PRO_0000176925" description="Transcription elongation factor GreA">
    <location>
        <begin position="1"/>
        <end position="158"/>
    </location>
</feature>
<comment type="function">
    <text evidence="1">Necessary for efficient RNA polymerase transcription elongation past template-encoded arresting sites. The arresting sites in DNA have the property of trapping a certain fraction of elongating RNA polymerases that pass through, resulting in locked ternary complexes. Cleavage of the nascent transcript by cleavage factors such as GreA or GreB allows the resumption of elongation from the new 3'terminus. GreA releases sequences of 2 to 3 nucleotides (By similarity).</text>
</comment>
<comment type="similarity">
    <text evidence="2">Belongs to the GreA/GreB family.</text>
</comment>
<comment type="sequence caution" evidence="2">
    <conflict type="erroneous initiation">
        <sequence resource="EMBL-CDS" id="AAG58315"/>
    </conflict>
    <text>Truncated N-terminus.</text>
</comment>
<gene>
    <name type="primary">greA</name>
    <name type="ordered locus">Z4543</name>
    <name type="ordered locus">ECs4060</name>
</gene>
<dbReference type="EMBL" id="AE005174">
    <property type="protein sequence ID" value="AAG58315.1"/>
    <property type="status" value="ALT_INIT"/>
    <property type="molecule type" value="Genomic_DNA"/>
</dbReference>
<dbReference type="EMBL" id="BA000007">
    <property type="protein sequence ID" value="BAB37483.2"/>
    <property type="molecule type" value="Genomic_DNA"/>
</dbReference>
<dbReference type="RefSeq" id="NP_312087.2">
    <property type="nucleotide sequence ID" value="NC_002695.1"/>
</dbReference>
<dbReference type="RefSeq" id="WP_001148001.1">
    <property type="nucleotide sequence ID" value="NZ_VOAI01000014.1"/>
</dbReference>
<dbReference type="SMR" id="P0A6W7"/>
<dbReference type="STRING" id="155864.Z4543"/>
<dbReference type="GeneID" id="916087"/>
<dbReference type="GeneID" id="93778800"/>
<dbReference type="KEGG" id="ece:Z4543"/>
<dbReference type="KEGG" id="ecs:ECs_4060"/>
<dbReference type="PATRIC" id="fig|386585.9.peg.4239"/>
<dbReference type="eggNOG" id="COG0782">
    <property type="taxonomic scope" value="Bacteria"/>
</dbReference>
<dbReference type="HOGENOM" id="CLU_101379_2_0_6"/>
<dbReference type="OMA" id="TWLTQEA"/>
<dbReference type="Proteomes" id="UP000000558">
    <property type="component" value="Chromosome"/>
</dbReference>
<dbReference type="Proteomes" id="UP000002519">
    <property type="component" value="Chromosome"/>
</dbReference>
<dbReference type="GO" id="GO:0003677">
    <property type="term" value="F:DNA binding"/>
    <property type="evidence" value="ECO:0007669"/>
    <property type="project" value="UniProtKB-UniRule"/>
</dbReference>
<dbReference type="GO" id="GO:0070063">
    <property type="term" value="F:RNA polymerase binding"/>
    <property type="evidence" value="ECO:0007669"/>
    <property type="project" value="InterPro"/>
</dbReference>
<dbReference type="GO" id="GO:0006354">
    <property type="term" value="P:DNA-templated transcription elongation"/>
    <property type="evidence" value="ECO:0007669"/>
    <property type="project" value="TreeGrafter"/>
</dbReference>
<dbReference type="GO" id="GO:0032784">
    <property type="term" value="P:regulation of DNA-templated transcription elongation"/>
    <property type="evidence" value="ECO:0007669"/>
    <property type="project" value="UniProtKB-UniRule"/>
</dbReference>
<dbReference type="FunFam" id="1.10.287.180:FF:000001">
    <property type="entry name" value="Transcription elongation factor GreA"/>
    <property type="match status" value="1"/>
</dbReference>
<dbReference type="FunFam" id="3.10.50.30:FF:000001">
    <property type="entry name" value="Transcription elongation factor GreA"/>
    <property type="match status" value="1"/>
</dbReference>
<dbReference type="Gene3D" id="3.10.50.30">
    <property type="entry name" value="Transcription elongation factor, GreA/GreB, C-terminal domain"/>
    <property type="match status" value="1"/>
</dbReference>
<dbReference type="Gene3D" id="1.10.287.180">
    <property type="entry name" value="Transcription elongation factor, GreA/GreB, N-terminal domain"/>
    <property type="match status" value="1"/>
</dbReference>
<dbReference type="HAMAP" id="MF_00105">
    <property type="entry name" value="GreA_GreB"/>
    <property type="match status" value="1"/>
</dbReference>
<dbReference type="InterPro" id="IPR036953">
    <property type="entry name" value="GreA/GreB_C_sf"/>
</dbReference>
<dbReference type="InterPro" id="IPR018151">
    <property type="entry name" value="TF_GreA/GreB_CS"/>
</dbReference>
<dbReference type="InterPro" id="IPR006359">
    <property type="entry name" value="Tscrpt_elong_fac_GreA"/>
</dbReference>
<dbReference type="InterPro" id="IPR028624">
    <property type="entry name" value="Tscrpt_elong_fac_GreA/B"/>
</dbReference>
<dbReference type="InterPro" id="IPR001437">
    <property type="entry name" value="Tscrpt_elong_fac_GreA/B_C"/>
</dbReference>
<dbReference type="InterPro" id="IPR023459">
    <property type="entry name" value="Tscrpt_elong_fac_GreA/B_fam"/>
</dbReference>
<dbReference type="InterPro" id="IPR022691">
    <property type="entry name" value="Tscrpt_elong_fac_GreA/B_N"/>
</dbReference>
<dbReference type="InterPro" id="IPR036805">
    <property type="entry name" value="Tscrpt_elong_fac_GreA/B_N_sf"/>
</dbReference>
<dbReference type="NCBIfam" id="TIGR01462">
    <property type="entry name" value="greA"/>
    <property type="match status" value="1"/>
</dbReference>
<dbReference type="NCBIfam" id="NF001261">
    <property type="entry name" value="PRK00226.1-2"/>
    <property type="match status" value="1"/>
</dbReference>
<dbReference type="NCBIfam" id="NF001263">
    <property type="entry name" value="PRK00226.1-4"/>
    <property type="match status" value="1"/>
</dbReference>
<dbReference type="NCBIfam" id="NF001264">
    <property type="entry name" value="PRK00226.1-5"/>
    <property type="match status" value="1"/>
</dbReference>
<dbReference type="PANTHER" id="PTHR30437">
    <property type="entry name" value="TRANSCRIPTION ELONGATION FACTOR GREA"/>
    <property type="match status" value="1"/>
</dbReference>
<dbReference type="PANTHER" id="PTHR30437:SF4">
    <property type="entry name" value="TRANSCRIPTION ELONGATION FACTOR GREA"/>
    <property type="match status" value="1"/>
</dbReference>
<dbReference type="Pfam" id="PF01272">
    <property type="entry name" value="GreA_GreB"/>
    <property type="match status" value="1"/>
</dbReference>
<dbReference type="Pfam" id="PF03449">
    <property type="entry name" value="GreA_GreB_N"/>
    <property type="match status" value="1"/>
</dbReference>
<dbReference type="PIRSF" id="PIRSF006092">
    <property type="entry name" value="GreA_GreB"/>
    <property type="match status" value="1"/>
</dbReference>
<dbReference type="SUPFAM" id="SSF54534">
    <property type="entry name" value="FKBP-like"/>
    <property type="match status" value="1"/>
</dbReference>
<dbReference type="SUPFAM" id="SSF46557">
    <property type="entry name" value="GreA transcript cleavage protein, N-terminal domain"/>
    <property type="match status" value="1"/>
</dbReference>
<dbReference type="PROSITE" id="PS00829">
    <property type="entry name" value="GREAB_1"/>
    <property type="match status" value="1"/>
</dbReference>
<dbReference type="PROSITE" id="PS00830">
    <property type="entry name" value="GREAB_2"/>
    <property type="match status" value="1"/>
</dbReference>
<sequence length="158" mass="17641">MQAIPMTLRGAEKLREELDFLKSVRRPEIIAAIAEAREHGDLKENAEYHAAREQQGFCEGRIKDIEAKLSNAQVIDVTKMPNNGRVIFGATVTVLNLDSDEEQTYRIVGDDEADFKQNLISVNSPIARGLIGKEEDDVVVIKTPGGEVEFEVIKVEYL</sequence>
<keyword id="KW-0238">DNA-binding</keyword>
<keyword id="KW-1185">Reference proteome</keyword>
<keyword id="KW-0804">Transcription</keyword>
<keyword id="KW-0805">Transcription regulation</keyword>
<protein>
    <recommendedName>
        <fullName>Transcription elongation factor GreA</fullName>
    </recommendedName>
    <alternativeName>
        <fullName>Transcript cleavage factor GreA</fullName>
    </alternativeName>
</protein>
<accession>P0A6W7</accession>
<accession>P21346</accession>
<accession>P78111</accession>
<accession>Q8X9K9</accession>
<reference key="1">
    <citation type="journal article" date="2001" name="Nature">
        <title>Genome sequence of enterohaemorrhagic Escherichia coli O157:H7.</title>
        <authorList>
            <person name="Perna N.T."/>
            <person name="Plunkett G. III"/>
            <person name="Burland V."/>
            <person name="Mau B."/>
            <person name="Glasner J.D."/>
            <person name="Rose D.J."/>
            <person name="Mayhew G.F."/>
            <person name="Evans P.S."/>
            <person name="Gregor J."/>
            <person name="Kirkpatrick H.A."/>
            <person name="Posfai G."/>
            <person name="Hackett J."/>
            <person name="Klink S."/>
            <person name="Boutin A."/>
            <person name="Shao Y."/>
            <person name="Miller L."/>
            <person name="Grotbeck E.J."/>
            <person name="Davis N.W."/>
            <person name="Lim A."/>
            <person name="Dimalanta E.T."/>
            <person name="Potamousis K."/>
            <person name="Apodaca J."/>
            <person name="Anantharaman T.S."/>
            <person name="Lin J."/>
            <person name="Yen G."/>
            <person name="Schwartz D.C."/>
            <person name="Welch R.A."/>
            <person name="Blattner F.R."/>
        </authorList>
    </citation>
    <scope>NUCLEOTIDE SEQUENCE [LARGE SCALE GENOMIC DNA]</scope>
    <source>
        <strain>O157:H7 / EDL933 / ATCC 700927 / EHEC</strain>
    </source>
</reference>
<reference key="2">
    <citation type="journal article" date="2001" name="DNA Res.">
        <title>Complete genome sequence of enterohemorrhagic Escherichia coli O157:H7 and genomic comparison with a laboratory strain K-12.</title>
        <authorList>
            <person name="Hayashi T."/>
            <person name="Makino K."/>
            <person name="Ohnishi M."/>
            <person name="Kurokawa K."/>
            <person name="Ishii K."/>
            <person name="Yokoyama K."/>
            <person name="Han C.-G."/>
            <person name="Ohtsubo E."/>
            <person name="Nakayama K."/>
            <person name="Murata T."/>
            <person name="Tanaka M."/>
            <person name="Tobe T."/>
            <person name="Iida T."/>
            <person name="Takami H."/>
            <person name="Honda T."/>
            <person name="Sasakawa C."/>
            <person name="Ogasawara N."/>
            <person name="Yasunaga T."/>
            <person name="Kuhara S."/>
            <person name="Shiba T."/>
            <person name="Hattori M."/>
            <person name="Shinagawa H."/>
        </authorList>
    </citation>
    <scope>NUCLEOTIDE SEQUENCE [LARGE SCALE GENOMIC DNA]</scope>
    <source>
        <strain>O157:H7 / Sakai / RIMD 0509952 / EHEC</strain>
    </source>
</reference>
<name>GREA_ECO57</name>
<organism>
    <name type="scientific">Escherichia coli O157:H7</name>
    <dbReference type="NCBI Taxonomy" id="83334"/>
    <lineage>
        <taxon>Bacteria</taxon>
        <taxon>Pseudomonadati</taxon>
        <taxon>Pseudomonadota</taxon>
        <taxon>Gammaproteobacteria</taxon>
        <taxon>Enterobacterales</taxon>
        <taxon>Enterobacteriaceae</taxon>
        <taxon>Escherichia</taxon>
    </lineage>
</organism>
<proteinExistence type="inferred from homology"/>
<evidence type="ECO:0000250" key="1"/>
<evidence type="ECO:0000305" key="2"/>